<sequence length="262" mass="30076">MAASMAPRCSSLLWAGAAWLRQRGIGELLQPRIERSTPGRDFSLSHYQSTVIVERWWKVPLAGEGRKPRLHRRHRVYKLVEDTKHRPKDHLELILTQSVDEIGVRGDLVSVKKSVGRNKLLPQGLAVYASPENRKLFEEEKLLRQEGKLEKIQTKAGEATVKFLRSCRLEVGMKNNVKWELNPEIVARHFFKNLGVVVAPHALRLPEDPITRWGEYWCDVTVNGLDTVRVPMSVVLFRKPKTKRYKHWLAQQAAKITSPEAV</sequence>
<dbReference type="EMBL" id="BC082085">
    <property type="protein sequence ID" value="AAH82085.1"/>
    <property type="molecule type" value="mRNA"/>
</dbReference>
<dbReference type="RefSeq" id="NP_001007697.1">
    <property type="nucleotide sequence ID" value="NM_001007696.1"/>
</dbReference>
<dbReference type="SMR" id="Q641X9"/>
<dbReference type="FunCoup" id="Q641X9">
    <property type="interactions" value="2592"/>
</dbReference>
<dbReference type="STRING" id="10116.ENSRNOP00000028316"/>
<dbReference type="PhosphoSitePlus" id="Q641X9"/>
<dbReference type="PaxDb" id="10116-ENSRNOP00000028316"/>
<dbReference type="GeneID" id="310653"/>
<dbReference type="KEGG" id="rno:310653"/>
<dbReference type="UCSC" id="RGD:1359171">
    <property type="organism name" value="rat"/>
</dbReference>
<dbReference type="AGR" id="RGD:1359171"/>
<dbReference type="CTD" id="65005"/>
<dbReference type="RGD" id="1359171">
    <property type="gene designation" value="mrpl9"/>
</dbReference>
<dbReference type="VEuPathDB" id="HostDB:ENSRNOG00000020869"/>
<dbReference type="eggNOG" id="KOG4607">
    <property type="taxonomic scope" value="Eukaryota"/>
</dbReference>
<dbReference type="HOGENOM" id="CLU_078938_0_0_1"/>
<dbReference type="InParanoid" id="Q641X9"/>
<dbReference type="OrthoDB" id="76737at9989"/>
<dbReference type="PhylomeDB" id="Q641X9"/>
<dbReference type="TreeFam" id="TF300170"/>
<dbReference type="Reactome" id="R-RNO-5389840">
    <property type="pathway name" value="Mitochondrial translation elongation"/>
</dbReference>
<dbReference type="Reactome" id="R-RNO-5419276">
    <property type="pathway name" value="Mitochondrial translation termination"/>
</dbReference>
<dbReference type="PRO" id="PR:Q641X9"/>
<dbReference type="Proteomes" id="UP000002494">
    <property type="component" value="Chromosome 2"/>
</dbReference>
<dbReference type="Bgee" id="ENSRNOG00000020869">
    <property type="expression patterns" value="Expressed in jejunum and 20 other cell types or tissues"/>
</dbReference>
<dbReference type="GO" id="GO:0005762">
    <property type="term" value="C:mitochondrial large ribosomal subunit"/>
    <property type="evidence" value="ECO:0000250"/>
    <property type="project" value="UniProtKB"/>
</dbReference>
<dbReference type="GO" id="GO:0005739">
    <property type="term" value="C:mitochondrion"/>
    <property type="evidence" value="ECO:0000250"/>
    <property type="project" value="UniProtKB"/>
</dbReference>
<dbReference type="GO" id="GO:0003735">
    <property type="term" value="F:structural constituent of ribosome"/>
    <property type="evidence" value="ECO:0007669"/>
    <property type="project" value="InterPro"/>
</dbReference>
<dbReference type="GO" id="GO:0006412">
    <property type="term" value="P:translation"/>
    <property type="evidence" value="ECO:0007669"/>
    <property type="project" value="InterPro"/>
</dbReference>
<dbReference type="FunFam" id="3.40.5.10:FF:000005">
    <property type="entry name" value="39S ribosomal protein L9, mitochondrial"/>
    <property type="match status" value="1"/>
</dbReference>
<dbReference type="Gene3D" id="3.40.5.10">
    <property type="entry name" value="Ribosomal protein L9, N-terminal domain"/>
    <property type="match status" value="1"/>
</dbReference>
<dbReference type="InterPro" id="IPR056864">
    <property type="entry name" value="MRP-L9_N"/>
</dbReference>
<dbReference type="InterPro" id="IPR000244">
    <property type="entry name" value="Ribosomal_bL9"/>
</dbReference>
<dbReference type="InterPro" id="IPR009027">
    <property type="entry name" value="Ribosomal_bL9/RNase_H1_N"/>
</dbReference>
<dbReference type="InterPro" id="IPR020070">
    <property type="entry name" value="Ribosomal_bL9_N"/>
</dbReference>
<dbReference type="InterPro" id="IPR036935">
    <property type="entry name" value="Ribosomal_bL9_N_sf"/>
</dbReference>
<dbReference type="InterPro" id="IPR054302">
    <property type="entry name" value="Ribosomal_bL9m_C"/>
</dbReference>
<dbReference type="PANTHER" id="PTHR21368">
    <property type="entry name" value="50S RIBOSOMAL PROTEIN L9"/>
    <property type="match status" value="1"/>
</dbReference>
<dbReference type="Pfam" id="PF25131">
    <property type="entry name" value="bL9m_N"/>
    <property type="match status" value="1"/>
</dbReference>
<dbReference type="Pfam" id="PF22078">
    <property type="entry name" value="Ribosomal_bL9m_C"/>
    <property type="match status" value="1"/>
</dbReference>
<dbReference type="Pfam" id="PF01281">
    <property type="entry name" value="Ribosomal_L9_N"/>
    <property type="match status" value="1"/>
</dbReference>
<dbReference type="SUPFAM" id="SSF55658">
    <property type="entry name" value="L9 N-domain-like"/>
    <property type="match status" value="1"/>
</dbReference>
<name>RM09_RAT</name>
<keyword id="KW-0496">Mitochondrion</keyword>
<keyword id="KW-1185">Reference proteome</keyword>
<keyword id="KW-0687">Ribonucleoprotein</keyword>
<keyword id="KW-0689">Ribosomal protein</keyword>
<keyword id="KW-0809">Transit peptide</keyword>
<accession>Q641X9</accession>
<protein>
    <recommendedName>
        <fullName evidence="3">Large ribosomal subunit protein bL9m</fullName>
    </recommendedName>
    <alternativeName>
        <fullName>39S ribosomal protein L9, mitochondrial</fullName>
        <shortName>L9mt</shortName>
        <shortName>MRP-L9</shortName>
    </alternativeName>
</protein>
<evidence type="ECO:0000250" key="1">
    <source>
        <dbReference type="UniProtKB" id="Q2TBK2"/>
    </source>
</evidence>
<evidence type="ECO:0000250" key="2">
    <source>
        <dbReference type="UniProtKB" id="Q9BYD2"/>
    </source>
</evidence>
<evidence type="ECO:0000305" key="3"/>
<proteinExistence type="evidence at transcript level"/>
<organism>
    <name type="scientific">Rattus norvegicus</name>
    <name type="common">Rat</name>
    <dbReference type="NCBI Taxonomy" id="10116"/>
    <lineage>
        <taxon>Eukaryota</taxon>
        <taxon>Metazoa</taxon>
        <taxon>Chordata</taxon>
        <taxon>Craniata</taxon>
        <taxon>Vertebrata</taxon>
        <taxon>Euteleostomi</taxon>
        <taxon>Mammalia</taxon>
        <taxon>Eutheria</taxon>
        <taxon>Euarchontoglires</taxon>
        <taxon>Glires</taxon>
        <taxon>Rodentia</taxon>
        <taxon>Myomorpha</taxon>
        <taxon>Muroidea</taxon>
        <taxon>Muridae</taxon>
        <taxon>Murinae</taxon>
        <taxon>Rattus</taxon>
    </lineage>
</organism>
<feature type="transit peptide" description="Mitochondrion" evidence="1">
    <location>
        <begin position="1"/>
        <end position="49"/>
    </location>
</feature>
<feature type="chain" id="PRO_0000322118" description="Large ribosomal subunit protein bL9m">
    <location>
        <begin position="50"/>
        <end position="262"/>
    </location>
</feature>
<gene>
    <name type="primary">Mrpl9</name>
</gene>
<reference key="1">
    <citation type="journal article" date="2004" name="Genome Res.">
        <title>The status, quality, and expansion of the NIH full-length cDNA project: the Mammalian Gene Collection (MGC).</title>
        <authorList>
            <consortium name="The MGC Project Team"/>
        </authorList>
    </citation>
    <scope>NUCLEOTIDE SEQUENCE [LARGE SCALE MRNA]</scope>
    <source>
        <tissue>Testis</tissue>
    </source>
</reference>
<comment type="subunit">
    <text evidence="2">Component of the mitochondrial ribosome large subunit (39S) which comprises a 16S rRNA and about 50 distinct proteins.</text>
</comment>
<comment type="subcellular location">
    <subcellularLocation>
        <location evidence="2">Mitochondrion</location>
    </subcellularLocation>
</comment>
<comment type="similarity">
    <text evidence="3">Belongs to the bacterial ribosomal protein bL9 family.</text>
</comment>